<reference key="1">
    <citation type="journal article" date="2008" name="Proc. Natl. Acad. Sci. U.S.A.">
        <title>Niche adaptation and genome expansion in the chlorophyll d-producing cyanobacterium Acaryochloris marina.</title>
        <authorList>
            <person name="Swingley W.D."/>
            <person name="Chen M."/>
            <person name="Cheung P.C."/>
            <person name="Conrad A.L."/>
            <person name="Dejesa L.C."/>
            <person name="Hao J."/>
            <person name="Honchak B.M."/>
            <person name="Karbach L.E."/>
            <person name="Kurdoglu A."/>
            <person name="Lahiri S."/>
            <person name="Mastrian S.D."/>
            <person name="Miyashita H."/>
            <person name="Page L."/>
            <person name="Ramakrishna P."/>
            <person name="Satoh S."/>
            <person name="Sattley W.M."/>
            <person name="Shimada Y."/>
            <person name="Taylor H.L."/>
            <person name="Tomo T."/>
            <person name="Tsuchiya T."/>
            <person name="Wang Z.T."/>
            <person name="Raymond J."/>
            <person name="Mimuro M."/>
            <person name="Blankenship R.E."/>
            <person name="Touchman J.W."/>
        </authorList>
    </citation>
    <scope>NUCLEOTIDE SEQUENCE [LARGE SCALE GENOMIC DNA]</scope>
    <source>
        <strain>MBIC 11017</strain>
    </source>
</reference>
<gene>
    <name evidence="1" type="primary">sfsA</name>
    <name type="ordered locus">AM1_2341</name>
</gene>
<comment type="similarity">
    <text evidence="1">Belongs to the SfsA family.</text>
</comment>
<dbReference type="EMBL" id="CP000828">
    <property type="protein sequence ID" value="ABW27351.1"/>
    <property type="molecule type" value="Genomic_DNA"/>
</dbReference>
<dbReference type="RefSeq" id="WP_012162825.1">
    <property type="nucleotide sequence ID" value="NC_009925.1"/>
</dbReference>
<dbReference type="SMR" id="B0C250"/>
<dbReference type="STRING" id="329726.AM1_2341"/>
<dbReference type="KEGG" id="amr:AM1_2341"/>
<dbReference type="eggNOG" id="COG1489">
    <property type="taxonomic scope" value="Bacteria"/>
</dbReference>
<dbReference type="HOGENOM" id="CLU_052299_2_0_3"/>
<dbReference type="OrthoDB" id="9802365at2"/>
<dbReference type="Proteomes" id="UP000000268">
    <property type="component" value="Chromosome"/>
</dbReference>
<dbReference type="GO" id="GO:0003677">
    <property type="term" value="F:DNA binding"/>
    <property type="evidence" value="ECO:0007669"/>
    <property type="project" value="InterPro"/>
</dbReference>
<dbReference type="CDD" id="cd22359">
    <property type="entry name" value="SfsA-like_bacterial"/>
    <property type="match status" value="1"/>
</dbReference>
<dbReference type="FunFam" id="2.40.50.580:FF:000001">
    <property type="entry name" value="Sugar fermentation stimulation protein A"/>
    <property type="match status" value="1"/>
</dbReference>
<dbReference type="Gene3D" id="2.40.50.580">
    <property type="match status" value="1"/>
</dbReference>
<dbReference type="Gene3D" id="3.40.1350.60">
    <property type="match status" value="1"/>
</dbReference>
<dbReference type="HAMAP" id="MF_00095">
    <property type="entry name" value="SfsA"/>
    <property type="match status" value="1"/>
</dbReference>
<dbReference type="InterPro" id="IPR005224">
    <property type="entry name" value="SfsA"/>
</dbReference>
<dbReference type="InterPro" id="IPR040452">
    <property type="entry name" value="SfsA_C"/>
</dbReference>
<dbReference type="InterPro" id="IPR041465">
    <property type="entry name" value="SfsA_N"/>
</dbReference>
<dbReference type="NCBIfam" id="TIGR00230">
    <property type="entry name" value="sfsA"/>
    <property type="match status" value="1"/>
</dbReference>
<dbReference type="PANTHER" id="PTHR30545">
    <property type="entry name" value="SUGAR FERMENTATION STIMULATION PROTEIN A"/>
    <property type="match status" value="1"/>
</dbReference>
<dbReference type="PANTHER" id="PTHR30545:SF2">
    <property type="entry name" value="SUGAR FERMENTATION STIMULATION PROTEIN A"/>
    <property type="match status" value="1"/>
</dbReference>
<dbReference type="Pfam" id="PF03749">
    <property type="entry name" value="SfsA"/>
    <property type="match status" value="1"/>
</dbReference>
<dbReference type="Pfam" id="PF17746">
    <property type="entry name" value="SfsA_N"/>
    <property type="match status" value="1"/>
</dbReference>
<proteinExistence type="inferred from homology"/>
<sequence length="243" mass="27305">MADWLYQYPPLLAGTLIKRYKRFLADIELDTGEVVTAHCPNTGPMTGMCAPHSRVQISQSNNPKRKLAYTWEMIEVCDTEPTWVGVNTQIPNLVVKQLLQNRLLPTLGEYDQVKSEVRYGREKSRIDFLLTGTAQPAYIEVKSTTWAIEKQALFPDTVTIRGQKHIRELISVLPAAQAYLLFFINRADCTTFAPGDQADPEYGKLLREAVATGVGLLPCRFEITPEGIRYLGLATVEESSLTR</sequence>
<feature type="chain" id="PRO_1000075532" description="Sugar fermentation stimulation protein homolog">
    <location>
        <begin position="1"/>
        <end position="243"/>
    </location>
</feature>
<name>SFSA_ACAM1</name>
<protein>
    <recommendedName>
        <fullName evidence="1">Sugar fermentation stimulation protein homolog</fullName>
    </recommendedName>
</protein>
<accession>B0C250</accession>
<evidence type="ECO:0000255" key="1">
    <source>
        <dbReference type="HAMAP-Rule" id="MF_00095"/>
    </source>
</evidence>
<organism>
    <name type="scientific">Acaryochloris marina (strain MBIC 11017)</name>
    <dbReference type="NCBI Taxonomy" id="329726"/>
    <lineage>
        <taxon>Bacteria</taxon>
        <taxon>Bacillati</taxon>
        <taxon>Cyanobacteriota</taxon>
        <taxon>Cyanophyceae</taxon>
        <taxon>Acaryochloridales</taxon>
        <taxon>Acaryochloridaceae</taxon>
        <taxon>Acaryochloris</taxon>
    </lineage>
</organism>
<keyword id="KW-1185">Reference proteome</keyword>